<reference key="1">
    <citation type="journal article" date="2005" name="Eukaryot. Cell">
        <title>Contribution of horizontal gene transfer to the evolution of Saccharomyces cerevisiae.</title>
        <authorList>
            <person name="Hall C.R."/>
            <person name="Brachat S."/>
            <person name="Dietrich F.S."/>
        </authorList>
    </citation>
    <scope>NUCLEOTIDE SEQUENCE [GENOMIC DNA]</scope>
    <source>
        <strain>ATCC 2001 / BCRC 20586 / JCM 3761 / NBRC 0622 / NRRL Y-65 / CBS 138</strain>
    </source>
</reference>
<reference key="2">
    <citation type="journal article" date="2004" name="Nature">
        <title>Genome evolution in yeasts.</title>
        <authorList>
            <person name="Dujon B."/>
            <person name="Sherman D."/>
            <person name="Fischer G."/>
            <person name="Durrens P."/>
            <person name="Casaregola S."/>
            <person name="Lafontaine I."/>
            <person name="de Montigny J."/>
            <person name="Marck C."/>
            <person name="Neuveglise C."/>
            <person name="Talla E."/>
            <person name="Goffard N."/>
            <person name="Frangeul L."/>
            <person name="Aigle M."/>
            <person name="Anthouard V."/>
            <person name="Babour A."/>
            <person name="Barbe V."/>
            <person name="Barnay S."/>
            <person name="Blanchin S."/>
            <person name="Beckerich J.-M."/>
            <person name="Beyne E."/>
            <person name="Bleykasten C."/>
            <person name="Boisrame A."/>
            <person name="Boyer J."/>
            <person name="Cattolico L."/>
            <person name="Confanioleri F."/>
            <person name="de Daruvar A."/>
            <person name="Despons L."/>
            <person name="Fabre E."/>
            <person name="Fairhead C."/>
            <person name="Ferry-Dumazet H."/>
            <person name="Groppi A."/>
            <person name="Hantraye F."/>
            <person name="Hennequin C."/>
            <person name="Jauniaux N."/>
            <person name="Joyet P."/>
            <person name="Kachouri R."/>
            <person name="Kerrest A."/>
            <person name="Koszul R."/>
            <person name="Lemaire M."/>
            <person name="Lesur I."/>
            <person name="Ma L."/>
            <person name="Muller H."/>
            <person name="Nicaud J.-M."/>
            <person name="Nikolski M."/>
            <person name="Oztas S."/>
            <person name="Ozier-Kalogeropoulos O."/>
            <person name="Pellenz S."/>
            <person name="Potier S."/>
            <person name="Richard G.-F."/>
            <person name="Straub M.-L."/>
            <person name="Suleau A."/>
            <person name="Swennen D."/>
            <person name="Tekaia F."/>
            <person name="Wesolowski-Louvel M."/>
            <person name="Westhof E."/>
            <person name="Wirth B."/>
            <person name="Zeniou-Meyer M."/>
            <person name="Zivanovic Y."/>
            <person name="Bolotin-Fukuhara M."/>
            <person name="Thierry A."/>
            <person name="Bouchier C."/>
            <person name="Caudron B."/>
            <person name="Scarpelli C."/>
            <person name="Gaillardin C."/>
            <person name="Weissenbach J."/>
            <person name="Wincker P."/>
            <person name="Souciet J.-L."/>
        </authorList>
    </citation>
    <scope>NUCLEOTIDE SEQUENCE [LARGE SCALE GENOMIC DNA]</scope>
    <source>
        <strain>ATCC 2001 / BCRC 20586 / JCM 3761 / NBRC 0622 / NRRL Y-65 / CBS 138</strain>
    </source>
</reference>
<proteinExistence type="inferred from homology"/>
<name>PYRD_CANGA</name>
<evidence type="ECO:0000250" key="1"/>
<evidence type="ECO:0000255" key="2"/>
<evidence type="ECO:0000305" key="3"/>
<organism>
    <name type="scientific">Candida glabrata (strain ATCC 2001 / BCRC 20586 / JCM 3761 / NBRC 0622 / NRRL Y-65 / CBS 138)</name>
    <name type="common">Yeast</name>
    <name type="synonym">Nakaseomyces glabratus</name>
    <dbReference type="NCBI Taxonomy" id="284593"/>
    <lineage>
        <taxon>Eukaryota</taxon>
        <taxon>Fungi</taxon>
        <taxon>Dikarya</taxon>
        <taxon>Ascomycota</taxon>
        <taxon>Saccharomycotina</taxon>
        <taxon>Saccharomycetes</taxon>
        <taxon>Saccharomycetales</taxon>
        <taxon>Saccharomycetaceae</taxon>
        <taxon>Nakaseomyces</taxon>
    </lineage>
</organism>
<gene>
    <name type="primary">URA9</name>
    <name type="ordered locus">CAGL0M12881g</name>
</gene>
<protein>
    <recommendedName>
        <fullName>Dihydroorotate dehydrogenase (quinone), mitochondrial</fullName>
        <shortName>DHOD</shortName>
        <shortName>DHODase</shortName>
        <shortName>DHOdehase</shortName>
        <ecNumber>1.3.5.2</ecNumber>
    </recommendedName>
    <alternativeName>
        <fullName>Dihydroorotate oxidase</fullName>
    </alternativeName>
</protein>
<comment type="function">
    <text evidence="1">Catalyzes the conversion of dihydroorotate to orotate with quinone as electron acceptor.</text>
</comment>
<comment type="catalytic activity">
    <reaction>
        <text>(S)-dihydroorotate + a quinone = orotate + a quinol</text>
        <dbReference type="Rhea" id="RHEA:30187"/>
        <dbReference type="ChEBI" id="CHEBI:24646"/>
        <dbReference type="ChEBI" id="CHEBI:30839"/>
        <dbReference type="ChEBI" id="CHEBI:30864"/>
        <dbReference type="ChEBI" id="CHEBI:132124"/>
        <dbReference type="EC" id="1.3.5.2"/>
    </reaction>
</comment>
<comment type="cofactor">
    <cofactor evidence="1">
        <name>FMN</name>
        <dbReference type="ChEBI" id="CHEBI:58210"/>
    </cofactor>
    <text evidence="1">Binds 1 FMN per subunit.</text>
</comment>
<comment type="pathway">
    <text>Pyrimidine metabolism; UMP biosynthesis via de novo pathway; orotate from (S)-dihydroorotate (quinone route): step 1/1.</text>
</comment>
<comment type="subcellular location">
    <subcellularLocation>
        <location evidence="1">Mitochondrion inner membrane</location>
        <topology evidence="3">Single-pass membrane protein</topology>
    </subcellularLocation>
</comment>
<comment type="similarity">
    <text evidence="3">Belongs to the dihydroorotate dehydrogenase family. Type 2 subfamily.</text>
</comment>
<feature type="transit peptide" description="Mitochondrion" evidence="2">
    <location>
        <begin position="1"/>
        <end position="22"/>
    </location>
</feature>
<feature type="chain" id="PRO_0000029892" description="Dihydroorotate dehydrogenase (quinone), mitochondrial">
    <location>
        <begin position="23"/>
        <end position="439"/>
    </location>
</feature>
<feature type="transmembrane region" description="Helical" evidence="2">
    <location>
        <begin position="37"/>
        <end position="53"/>
    </location>
</feature>
<feature type="active site" description="Nucleophile" evidence="1">
    <location>
        <position position="248"/>
    </location>
</feature>
<feature type="binding site" evidence="1">
    <location>
        <begin position="119"/>
        <end position="123"/>
    </location>
    <ligand>
        <name>FMN</name>
        <dbReference type="ChEBI" id="CHEBI:58210"/>
    </ligand>
</feature>
<feature type="binding site" evidence="1">
    <location>
        <position position="123"/>
    </location>
    <ligand>
        <name>substrate</name>
    </ligand>
</feature>
<feature type="binding site" evidence="1">
    <location>
        <position position="143"/>
    </location>
    <ligand>
        <name>FMN</name>
        <dbReference type="ChEBI" id="CHEBI:58210"/>
    </ligand>
</feature>
<feature type="binding site" evidence="1">
    <location>
        <begin position="168"/>
        <end position="172"/>
    </location>
    <ligand>
        <name>substrate</name>
    </ligand>
</feature>
<feature type="binding site" evidence="1">
    <location>
        <position position="215"/>
    </location>
    <ligand>
        <name>FMN</name>
        <dbReference type="ChEBI" id="CHEBI:58210"/>
    </ligand>
</feature>
<feature type="binding site" evidence="1">
    <location>
        <begin position="245"/>
        <end position="250"/>
    </location>
    <ligand>
        <name>substrate</name>
    </ligand>
</feature>
<feature type="binding site" evidence="1">
    <location>
        <position position="245"/>
    </location>
    <ligand>
        <name>FMN</name>
        <dbReference type="ChEBI" id="CHEBI:58210"/>
    </ligand>
</feature>
<feature type="binding site" evidence="1">
    <location>
        <position position="296"/>
    </location>
    <ligand>
        <name>FMN</name>
        <dbReference type="ChEBI" id="CHEBI:58210"/>
    </ligand>
</feature>
<feature type="binding site" evidence="1">
    <location>
        <position position="324"/>
    </location>
    <ligand>
        <name>FMN</name>
        <dbReference type="ChEBI" id="CHEBI:58210"/>
    </ligand>
</feature>
<feature type="binding site" evidence="1">
    <location>
        <begin position="325"/>
        <end position="326"/>
    </location>
    <ligand>
        <name>substrate</name>
    </ligand>
</feature>
<feature type="binding site" evidence="1">
    <location>
        <position position="350"/>
    </location>
    <ligand>
        <name>FMN</name>
        <dbReference type="ChEBI" id="CHEBI:58210"/>
    </ligand>
</feature>
<feature type="binding site" evidence="1">
    <location>
        <position position="380"/>
    </location>
    <ligand>
        <name>FMN</name>
        <dbReference type="ChEBI" id="CHEBI:58210"/>
    </ligand>
</feature>
<feature type="binding site" evidence="1">
    <location>
        <begin position="401"/>
        <end position="402"/>
    </location>
    <ligand>
        <name>FMN</name>
        <dbReference type="ChEBI" id="CHEBI:58210"/>
    </ligand>
</feature>
<keyword id="KW-0285">Flavoprotein</keyword>
<keyword id="KW-0288">FMN</keyword>
<keyword id="KW-0472">Membrane</keyword>
<keyword id="KW-0496">Mitochondrion</keyword>
<keyword id="KW-0999">Mitochondrion inner membrane</keyword>
<keyword id="KW-0560">Oxidoreductase</keyword>
<keyword id="KW-0665">Pyrimidine biosynthesis</keyword>
<keyword id="KW-1185">Reference proteome</keyword>
<keyword id="KW-0809">Transit peptide</keyword>
<keyword id="KW-0812">Transmembrane</keyword>
<keyword id="KW-1133">Transmembrane helix</keyword>
<sequence length="439" mass="48217">MMHRVGFNVIGRRSFFTVNARRQVLKSSFMGLKPLQLTALLLAGSAGYLYFMNARSAIHEYVVCPVVRLITPDPENGHKLGIWCFKWGLSPKLYFDKDPESLHVNVFGTTMTNPIGCAAGLDKDAEAIDGIMPTGFGYMEVGSVTPVAQPGNPRPRFFRLPADDAVINRYGFNSSGHDVVYNNLMKRVNKFLNSYFGDKSIDKLSLYKDKLLAVNLGKNKNGDEVKDYLKGVEKFQSLADVLVINVSSPNTPGLRDLQNEAKLTNLLSEIITKRDSQSNKPNALGKQNHKPPVLVKIAPDLTEPELQSIVEAAKKSKVDGIIVSNTTIQRPNTLKTQDETLRNQVGGLSGKPLKPFALKAMKAVSKYAKDSDLVLVGCGGISSGKDAIEFAKAGATFVQLYTSYAYVGPALIARIKDEVAEELKKEGKTWMEIIGEDNK</sequence>
<accession>Q6SZS5</accession>
<dbReference type="EC" id="1.3.5.2"/>
<dbReference type="EMBL" id="AY444340">
    <property type="protein sequence ID" value="AAR17523.1"/>
    <property type="molecule type" value="Genomic_DNA"/>
</dbReference>
<dbReference type="EMBL" id="CR380959">
    <property type="protein sequence ID" value="CAG62883.1"/>
    <property type="molecule type" value="Genomic_DNA"/>
</dbReference>
<dbReference type="RefSeq" id="XP_449903.1">
    <property type="nucleotide sequence ID" value="XM_449903.1"/>
</dbReference>
<dbReference type="SMR" id="Q6SZS5"/>
<dbReference type="FunCoup" id="Q6SZS5">
    <property type="interactions" value="751"/>
</dbReference>
<dbReference type="STRING" id="284593.Q6SZS5"/>
<dbReference type="EnsemblFungi" id="CAGL0M12881g-T">
    <property type="protein sequence ID" value="CAGL0M12881g-T-p1"/>
    <property type="gene ID" value="CAGL0M12881g"/>
</dbReference>
<dbReference type="KEGG" id="cgr:2891454"/>
<dbReference type="CGD" id="CAL0137113">
    <property type="gene designation" value="CAGL0M12881g"/>
</dbReference>
<dbReference type="VEuPathDB" id="FungiDB:B1J91_M12881g"/>
<dbReference type="VEuPathDB" id="FungiDB:CAGL0M12881g"/>
<dbReference type="eggNOG" id="KOG1436">
    <property type="taxonomic scope" value="Eukaryota"/>
</dbReference>
<dbReference type="HOGENOM" id="CLU_013640_4_0_1"/>
<dbReference type="InParanoid" id="Q6SZS5"/>
<dbReference type="OMA" id="IYGTDTR"/>
<dbReference type="UniPathway" id="UPA00070">
    <property type="reaction ID" value="UER00946"/>
</dbReference>
<dbReference type="Proteomes" id="UP000002428">
    <property type="component" value="Chromosome M"/>
</dbReference>
<dbReference type="GO" id="GO:0005743">
    <property type="term" value="C:mitochondrial inner membrane"/>
    <property type="evidence" value="ECO:0007669"/>
    <property type="project" value="UniProtKB-SubCell"/>
</dbReference>
<dbReference type="GO" id="GO:0106430">
    <property type="term" value="F:dihydroorotate dehydrogenase (quinone) activity"/>
    <property type="evidence" value="ECO:0007669"/>
    <property type="project" value="UniProtKB-EC"/>
</dbReference>
<dbReference type="GO" id="GO:0006207">
    <property type="term" value="P:'de novo' pyrimidine nucleobase biosynthetic process"/>
    <property type="evidence" value="ECO:0007669"/>
    <property type="project" value="InterPro"/>
</dbReference>
<dbReference type="GO" id="GO:0044205">
    <property type="term" value="P:'de novo' UMP biosynthetic process"/>
    <property type="evidence" value="ECO:0007669"/>
    <property type="project" value="UniProtKB-UniPathway"/>
</dbReference>
<dbReference type="CDD" id="cd04738">
    <property type="entry name" value="DHOD_2_like"/>
    <property type="match status" value="1"/>
</dbReference>
<dbReference type="Gene3D" id="3.20.20.70">
    <property type="entry name" value="Aldolase class I"/>
    <property type="match status" value="1"/>
</dbReference>
<dbReference type="InterPro" id="IPR013785">
    <property type="entry name" value="Aldolase_TIM"/>
</dbReference>
<dbReference type="InterPro" id="IPR050074">
    <property type="entry name" value="DHO_dehydrogenase"/>
</dbReference>
<dbReference type="InterPro" id="IPR005719">
    <property type="entry name" value="Dihydroorotate_DH_2"/>
</dbReference>
<dbReference type="InterPro" id="IPR005720">
    <property type="entry name" value="Dihydroorotate_DH_cat"/>
</dbReference>
<dbReference type="InterPro" id="IPR001295">
    <property type="entry name" value="Dihydroorotate_DH_CS"/>
</dbReference>
<dbReference type="NCBIfam" id="NF003645">
    <property type="entry name" value="PRK05286.1-2"/>
    <property type="match status" value="1"/>
</dbReference>
<dbReference type="NCBIfam" id="NF003652">
    <property type="entry name" value="PRK05286.2-5"/>
    <property type="match status" value="1"/>
</dbReference>
<dbReference type="NCBIfam" id="TIGR01036">
    <property type="entry name" value="pyrD_sub2"/>
    <property type="match status" value="1"/>
</dbReference>
<dbReference type="PANTHER" id="PTHR48109:SF4">
    <property type="entry name" value="DIHYDROOROTATE DEHYDROGENASE (QUINONE), MITOCHONDRIAL"/>
    <property type="match status" value="1"/>
</dbReference>
<dbReference type="PANTHER" id="PTHR48109">
    <property type="entry name" value="DIHYDROOROTATE DEHYDROGENASE (QUINONE), MITOCHONDRIAL-RELATED"/>
    <property type="match status" value="1"/>
</dbReference>
<dbReference type="Pfam" id="PF01180">
    <property type="entry name" value="DHO_dh"/>
    <property type="match status" value="1"/>
</dbReference>
<dbReference type="SUPFAM" id="SSF51395">
    <property type="entry name" value="FMN-linked oxidoreductases"/>
    <property type="match status" value="1"/>
</dbReference>
<dbReference type="PROSITE" id="PS00911">
    <property type="entry name" value="DHODEHASE_1"/>
    <property type="match status" value="1"/>
</dbReference>
<dbReference type="PROSITE" id="PS00912">
    <property type="entry name" value="DHODEHASE_2"/>
    <property type="match status" value="1"/>
</dbReference>